<proteinExistence type="inferred from homology"/>
<feature type="chain" id="PRO_1000050035" description="Probable protein kinase UbiB">
    <location>
        <begin position="1"/>
        <end position="544"/>
    </location>
</feature>
<feature type="transmembrane region" description="Helical" evidence="1">
    <location>
        <begin position="522"/>
        <end position="540"/>
    </location>
</feature>
<feature type="domain" description="Protein kinase" evidence="1">
    <location>
        <begin position="123"/>
        <end position="505"/>
    </location>
</feature>
<feature type="active site" description="Proton acceptor" evidence="1">
    <location>
        <position position="291"/>
    </location>
</feature>
<feature type="binding site" evidence="1">
    <location>
        <begin position="129"/>
        <end position="137"/>
    </location>
    <ligand>
        <name>ATP</name>
        <dbReference type="ChEBI" id="CHEBI:30616"/>
    </ligand>
</feature>
<feature type="binding site" evidence="1">
    <location>
        <position position="156"/>
    </location>
    <ligand>
        <name>ATP</name>
        <dbReference type="ChEBI" id="CHEBI:30616"/>
    </ligand>
</feature>
<accession>A3N3S2</accession>
<reference key="1">
    <citation type="journal article" date="2008" name="J. Bacteriol.">
        <title>The complete genome sequence of Actinobacillus pleuropneumoniae L20 (serotype 5b).</title>
        <authorList>
            <person name="Foote S.J."/>
            <person name="Bosse J.T."/>
            <person name="Bouevitch A.B."/>
            <person name="Langford P.R."/>
            <person name="Young N.M."/>
            <person name="Nash J.H.E."/>
        </authorList>
    </citation>
    <scope>NUCLEOTIDE SEQUENCE [LARGE SCALE GENOMIC DNA]</scope>
    <source>
        <strain>L20</strain>
    </source>
</reference>
<organism>
    <name type="scientific">Actinobacillus pleuropneumoniae serotype 5b (strain L20)</name>
    <dbReference type="NCBI Taxonomy" id="416269"/>
    <lineage>
        <taxon>Bacteria</taxon>
        <taxon>Pseudomonadati</taxon>
        <taxon>Pseudomonadota</taxon>
        <taxon>Gammaproteobacteria</taxon>
        <taxon>Pasteurellales</taxon>
        <taxon>Pasteurellaceae</taxon>
        <taxon>Actinobacillus</taxon>
    </lineage>
</organism>
<name>UBIB_ACTP2</name>
<evidence type="ECO:0000255" key="1">
    <source>
        <dbReference type="HAMAP-Rule" id="MF_00414"/>
    </source>
</evidence>
<dbReference type="EC" id="2.7.-.-" evidence="1"/>
<dbReference type="EMBL" id="CP000569">
    <property type="protein sequence ID" value="ABN75058.1"/>
    <property type="molecule type" value="Genomic_DNA"/>
</dbReference>
<dbReference type="RefSeq" id="WP_009874640.1">
    <property type="nucleotide sequence ID" value="NC_009053.1"/>
</dbReference>
<dbReference type="SMR" id="A3N3S2"/>
<dbReference type="STRING" id="416269.APL_1984"/>
<dbReference type="EnsemblBacteria" id="ABN75058">
    <property type="protein sequence ID" value="ABN75058"/>
    <property type="gene ID" value="APL_1984"/>
</dbReference>
<dbReference type="KEGG" id="apl:APL_1984"/>
<dbReference type="PATRIC" id="fig|416269.6.peg.2067"/>
<dbReference type="eggNOG" id="COG0661">
    <property type="taxonomic scope" value="Bacteria"/>
</dbReference>
<dbReference type="HOGENOM" id="CLU_006533_0_0_6"/>
<dbReference type="UniPathway" id="UPA00232"/>
<dbReference type="Proteomes" id="UP000001432">
    <property type="component" value="Chromosome"/>
</dbReference>
<dbReference type="GO" id="GO:0005886">
    <property type="term" value="C:plasma membrane"/>
    <property type="evidence" value="ECO:0007669"/>
    <property type="project" value="UniProtKB-SubCell"/>
</dbReference>
<dbReference type="GO" id="GO:0005524">
    <property type="term" value="F:ATP binding"/>
    <property type="evidence" value="ECO:0007669"/>
    <property type="project" value="UniProtKB-KW"/>
</dbReference>
<dbReference type="GO" id="GO:0004672">
    <property type="term" value="F:protein kinase activity"/>
    <property type="evidence" value="ECO:0007669"/>
    <property type="project" value="UniProtKB-UniRule"/>
</dbReference>
<dbReference type="GO" id="GO:0010795">
    <property type="term" value="P:regulation of ubiquinone biosynthetic process"/>
    <property type="evidence" value="ECO:0007669"/>
    <property type="project" value="UniProtKB-UniRule"/>
</dbReference>
<dbReference type="GO" id="GO:0006744">
    <property type="term" value="P:ubiquinone biosynthetic process"/>
    <property type="evidence" value="ECO:0007669"/>
    <property type="project" value="UniProtKB-UniPathway"/>
</dbReference>
<dbReference type="CDD" id="cd13972">
    <property type="entry name" value="UbiB"/>
    <property type="match status" value="1"/>
</dbReference>
<dbReference type="HAMAP" id="MF_00414">
    <property type="entry name" value="UbiB"/>
    <property type="match status" value="1"/>
</dbReference>
<dbReference type="InterPro" id="IPR004147">
    <property type="entry name" value="ABC1_dom"/>
</dbReference>
<dbReference type="InterPro" id="IPR011009">
    <property type="entry name" value="Kinase-like_dom_sf"/>
</dbReference>
<dbReference type="InterPro" id="IPR010232">
    <property type="entry name" value="UbiB"/>
</dbReference>
<dbReference type="InterPro" id="IPR045308">
    <property type="entry name" value="UbiB_bact"/>
</dbReference>
<dbReference type="InterPro" id="IPR050154">
    <property type="entry name" value="UbiB_kinase"/>
</dbReference>
<dbReference type="NCBIfam" id="NF003404">
    <property type="entry name" value="PRK04750.1"/>
    <property type="match status" value="1"/>
</dbReference>
<dbReference type="NCBIfam" id="TIGR01982">
    <property type="entry name" value="UbiB"/>
    <property type="match status" value="1"/>
</dbReference>
<dbReference type="PANTHER" id="PTHR10566">
    <property type="entry name" value="CHAPERONE-ACTIVITY OF BC1 COMPLEX CABC1 -RELATED"/>
    <property type="match status" value="1"/>
</dbReference>
<dbReference type="PANTHER" id="PTHR10566:SF113">
    <property type="entry name" value="PROTEIN ACTIVITY OF BC1 COMPLEX KINASE 7, CHLOROPLASTIC"/>
    <property type="match status" value="1"/>
</dbReference>
<dbReference type="Pfam" id="PF03109">
    <property type="entry name" value="ABC1"/>
    <property type="match status" value="1"/>
</dbReference>
<dbReference type="SUPFAM" id="SSF56112">
    <property type="entry name" value="Protein kinase-like (PK-like)"/>
    <property type="match status" value="1"/>
</dbReference>
<gene>
    <name evidence="1" type="primary">ubiB</name>
    <name type="ordered locus">APL_1984</name>
</gene>
<keyword id="KW-0067">ATP-binding</keyword>
<keyword id="KW-0997">Cell inner membrane</keyword>
<keyword id="KW-1003">Cell membrane</keyword>
<keyword id="KW-0418">Kinase</keyword>
<keyword id="KW-0472">Membrane</keyword>
<keyword id="KW-0547">Nucleotide-binding</keyword>
<keyword id="KW-1185">Reference proteome</keyword>
<keyword id="KW-0808">Transferase</keyword>
<keyword id="KW-0812">Transmembrane</keyword>
<keyword id="KW-1133">Transmembrane helix</keyword>
<keyword id="KW-0831">Ubiquinone biosynthesis</keyword>
<comment type="function">
    <text evidence="1">Is probably a protein kinase regulator of UbiI activity which is involved in aerobic coenzyme Q (ubiquinone) biosynthesis.</text>
</comment>
<comment type="pathway">
    <text>Cofactor biosynthesis; ubiquinone biosynthesis [regulation].</text>
</comment>
<comment type="subcellular location">
    <subcellularLocation>
        <location evidence="1">Cell inner membrane</location>
        <topology evidence="1">Single-pass membrane protein</topology>
    </subcellularLocation>
</comment>
<comment type="similarity">
    <text evidence="1">Belongs to the ABC1 family. UbiB subfamily.</text>
</comment>
<protein>
    <recommendedName>
        <fullName evidence="1">Probable protein kinase UbiB</fullName>
        <ecNumber evidence="1">2.7.-.-</ecNumber>
    </recommendedName>
    <alternativeName>
        <fullName evidence="1">Ubiquinone biosynthesis protein UbiB</fullName>
    </alternativeName>
</protein>
<sequence length="544" mass="62864">MTCKNTRRLYQIITTFLRYGIDEIIPDIPLTRHARLGRKALFWVRNQHKDQPFGVRLRLALQELGPVWIKLGQMLSTRRDLFEPELAEQLALLQDSVEPFDGKSARQIIEQALGGSLETWFDEFDEQALASASIAQVHTAKFNQNQPLAGKDVVLKVIRPDIEPIIKADIALMYRLASWIPRLSNDAKRLRATEVVREYEKTLLDELDLTREMANAIRLRNNFENSEMLYVPEMYQDFCHKNVIVMERIYGIPVSDVETLKANGTDMKLLAERGVQVFFTQVFRDSFFHADMHAGNIFVNPNHPENPQYIGIDCGIVGTLNQNDKRYLAESFVAFFNRDYRRVALMHVESGWTPPDTDIDAFEQAFREVCEPIFAKPLSEISFGHVLLNLFNVAREFNMEVQPQLVLLQKTLLYIEGLGRQVYPQLDLWQTAKPFLQNWLNEQVGVKAILRDLKQRAPQFREHFAEFPEAVFNALQQQKQINFRLDELNKTLQAQGRQKSHNVRSIVSGVIILGVLWRFDDLPLWLSCGTLVTVLLVLLLQRKS</sequence>